<sequence>MSGNLDVLSLKEDDVTKMLAATTHIGSTSVNFQMEQYVYKRRTDGVHIINLGRTYEKLLLAARCIASIEYPGEVFAISSRPYGQRAVLKYAHYTQATPIAGRFTPGAFTNQIQTTFREPRLLIVTDPLTDHQPVTEASYVNIPVIAFCNTDSPVKFVDIAIPCNTKSTHSIGLMWWMLAREVLRLRGKITHDRWEVMPDLFFFRDPEEAEKEQAAIEAAAPVIKDVPDEVVVADEPTTWGEDVTQTAMAVPQAKPLAVAGANDDWNEDDTAPAAPGAASWGGAAF</sequence>
<protein>
    <recommendedName>
        <fullName evidence="1">Small ribosomal subunit protein uS2</fullName>
    </recommendedName>
    <alternativeName>
        <fullName evidence="3">40S ribosomal protein SA</fullName>
    </alternativeName>
</protein>
<proteinExistence type="inferred from homology"/>
<comment type="function">
    <text evidence="1">Required for the assembly and/or stability of the 40S ribosomal subunit. Required for the processing of the 20S rRNA-precursor to mature 18S rRNA in a late step of the maturation of 40S ribosomal subunits.</text>
</comment>
<comment type="subunit">
    <text evidence="1">Component of the small ribosomal subunit. Mature ribosomes consist of a small (40S) and a large (60S) subunit. The 40S subunit contains about 33 different proteins and 1 molecule of RNA (18S). The 60S subunit contains about 49 different proteins and 3 molecules of RNA (28S, 5.8S and 5S). Interacts with ribosomal protein S21.</text>
</comment>
<comment type="subcellular location">
    <subcellularLocation>
        <location evidence="1">Cytoplasm</location>
    </subcellularLocation>
</comment>
<comment type="similarity">
    <text evidence="1">Belongs to the universal ribosomal protein uS2 family.</text>
</comment>
<reference key="1">
    <citation type="journal article" date="2002" name="Science">
        <title>The genome sequence of the malaria mosquito Anopheles gambiae.</title>
        <authorList>
            <person name="Holt R.A."/>
            <person name="Subramanian G.M."/>
            <person name="Halpern A."/>
            <person name="Sutton G.G."/>
            <person name="Charlab R."/>
            <person name="Nusskern D.R."/>
            <person name="Wincker P."/>
            <person name="Clark A.G."/>
            <person name="Ribeiro J.M.C."/>
            <person name="Wides R."/>
            <person name="Salzberg S.L."/>
            <person name="Loftus B.J."/>
            <person name="Yandell M.D."/>
            <person name="Majoros W.H."/>
            <person name="Rusch D.B."/>
            <person name="Lai Z."/>
            <person name="Kraft C.L."/>
            <person name="Abril J.F."/>
            <person name="Anthouard V."/>
            <person name="Arensburger P."/>
            <person name="Atkinson P.W."/>
            <person name="Baden H."/>
            <person name="de Berardinis V."/>
            <person name="Baldwin D."/>
            <person name="Benes V."/>
            <person name="Biedler J."/>
            <person name="Blass C."/>
            <person name="Bolanos R."/>
            <person name="Boscus D."/>
            <person name="Barnstead M."/>
            <person name="Cai S."/>
            <person name="Center A."/>
            <person name="Chaturverdi K."/>
            <person name="Christophides G.K."/>
            <person name="Chrystal M.A.M."/>
            <person name="Clamp M."/>
            <person name="Cravchik A."/>
            <person name="Curwen V."/>
            <person name="Dana A."/>
            <person name="Delcher A."/>
            <person name="Dew I."/>
            <person name="Evans C.A."/>
            <person name="Flanigan M."/>
            <person name="Grundschober-Freimoser A."/>
            <person name="Friedli L."/>
            <person name="Gu Z."/>
            <person name="Guan P."/>
            <person name="Guigo R."/>
            <person name="Hillenmeyer M.E."/>
            <person name="Hladun S.L."/>
            <person name="Hogan J.R."/>
            <person name="Hong Y.S."/>
            <person name="Hoover J."/>
            <person name="Jaillon O."/>
            <person name="Ke Z."/>
            <person name="Kodira C.D."/>
            <person name="Kokoza E."/>
            <person name="Koutsos A."/>
            <person name="Letunic I."/>
            <person name="Levitsky A.A."/>
            <person name="Liang Y."/>
            <person name="Lin J.-J."/>
            <person name="Lobo N.F."/>
            <person name="Lopez J.R."/>
            <person name="Malek J.A."/>
            <person name="McIntosh T.C."/>
            <person name="Meister S."/>
            <person name="Miller J.R."/>
            <person name="Mobarry C."/>
            <person name="Mongin E."/>
            <person name="Murphy S.D."/>
            <person name="O'Brochta D.A."/>
            <person name="Pfannkoch C."/>
            <person name="Qi R."/>
            <person name="Regier M.A."/>
            <person name="Remington K."/>
            <person name="Shao H."/>
            <person name="Sharakhova M.V."/>
            <person name="Sitter C.D."/>
            <person name="Shetty J."/>
            <person name="Smith T.J."/>
            <person name="Strong R."/>
            <person name="Sun J."/>
            <person name="Thomasova D."/>
            <person name="Ton L.Q."/>
            <person name="Topalis P."/>
            <person name="Tu Z.J."/>
            <person name="Unger M.F."/>
            <person name="Walenz B."/>
            <person name="Wang A.H."/>
            <person name="Wang J."/>
            <person name="Wang M."/>
            <person name="Wang X."/>
            <person name="Woodford K.J."/>
            <person name="Wortman J.R."/>
            <person name="Wu M."/>
            <person name="Yao A."/>
            <person name="Zdobnov E.M."/>
            <person name="Zhang H."/>
            <person name="Zhao Q."/>
            <person name="Zhao S."/>
            <person name="Zhu S.C."/>
            <person name="Zhimulev I."/>
            <person name="Coluzzi M."/>
            <person name="della Torre A."/>
            <person name="Roth C.W."/>
            <person name="Louis C."/>
            <person name="Kalush F."/>
            <person name="Mural R.J."/>
            <person name="Myers E.W."/>
            <person name="Adams M.D."/>
            <person name="Smith H.O."/>
            <person name="Broder S."/>
            <person name="Gardner M.J."/>
            <person name="Fraser C.M."/>
            <person name="Birney E."/>
            <person name="Bork P."/>
            <person name="Brey P.T."/>
            <person name="Venter J.C."/>
            <person name="Weissenbach J."/>
            <person name="Kafatos F.C."/>
            <person name="Collins F.H."/>
            <person name="Hoffman S.L."/>
        </authorList>
    </citation>
    <scope>NUCLEOTIDE SEQUENCE [LARGE SCALE GENOMIC DNA]</scope>
    <source>
        <strain>PEST</strain>
    </source>
</reference>
<feature type="initiator methionine" description="Removed" evidence="1">
    <location>
        <position position="1"/>
    </location>
</feature>
<feature type="chain" id="PRO_0000371576" description="Small ribosomal subunit protein uS2">
    <location>
        <begin position="2"/>
        <end position="285"/>
    </location>
</feature>
<feature type="region of interest" description="Disordered" evidence="2">
    <location>
        <begin position="262"/>
        <end position="285"/>
    </location>
</feature>
<feature type="compositionally biased region" description="Low complexity" evidence="2">
    <location>
        <begin position="271"/>
        <end position="285"/>
    </location>
</feature>
<name>RSSA_ANOGA</name>
<accession>Q7PZ81</accession>
<organism>
    <name type="scientific">Anopheles gambiae</name>
    <name type="common">African malaria mosquito</name>
    <dbReference type="NCBI Taxonomy" id="7165"/>
    <lineage>
        <taxon>Eukaryota</taxon>
        <taxon>Metazoa</taxon>
        <taxon>Ecdysozoa</taxon>
        <taxon>Arthropoda</taxon>
        <taxon>Hexapoda</taxon>
        <taxon>Insecta</taxon>
        <taxon>Pterygota</taxon>
        <taxon>Neoptera</taxon>
        <taxon>Endopterygota</taxon>
        <taxon>Diptera</taxon>
        <taxon>Nematocera</taxon>
        <taxon>Culicoidea</taxon>
        <taxon>Culicidae</taxon>
        <taxon>Anophelinae</taxon>
        <taxon>Anopheles</taxon>
    </lineage>
</organism>
<gene>
    <name type="ORF">AGAP011777</name>
</gene>
<evidence type="ECO:0000255" key="1">
    <source>
        <dbReference type="HAMAP-Rule" id="MF_03015"/>
    </source>
</evidence>
<evidence type="ECO:0000256" key="2">
    <source>
        <dbReference type="SAM" id="MobiDB-lite"/>
    </source>
</evidence>
<evidence type="ECO:0000305" key="3"/>
<dbReference type="EMBL" id="AAAB01008986">
    <property type="protein sequence ID" value="EAA00413.3"/>
    <property type="molecule type" value="Genomic_DNA"/>
</dbReference>
<dbReference type="SMR" id="Q7PZ81"/>
<dbReference type="FunCoup" id="Q7PZ81">
    <property type="interactions" value="1412"/>
</dbReference>
<dbReference type="STRING" id="7165.Q7PZ81"/>
<dbReference type="PaxDb" id="7165-AGAP011777-PA"/>
<dbReference type="EnsemblMetazoa" id="AGAP011777-RA">
    <property type="protein sequence ID" value="AGAP011777-PA"/>
    <property type="gene ID" value="AGAP011777"/>
</dbReference>
<dbReference type="GeneID" id="1280866"/>
<dbReference type="KEGG" id="aga:1280866"/>
<dbReference type="CTD" id="104044"/>
<dbReference type="VEuPathDB" id="VectorBase:AGAMI1_006594"/>
<dbReference type="VEuPathDB" id="VectorBase:AGAP011777"/>
<dbReference type="eggNOG" id="KOG0830">
    <property type="taxonomic scope" value="Eukaryota"/>
</dbReference>
<dbReference type="HOGENOM" id="CLU_058171_1_0_1"/>
<dbReference type="InParanoid" id="Q7PZ81"/>
<dbReference type="OMA" id="VKNFFEP"/>
<dbReference type="OrthoDB" id="414863at2759"/>
<dbReference type="PhylomeDB" id="Q7PZ81"/>
<dbReference type="Proteomes" id="UP000007062">
    <property type="component" value="Chromosome 3L"/>
</dbReference>
<dbReference type="GO" id="GO:0022627">
    <property type="term" value="C:cytosolic small ribosomal subunit"/>
    <property type="evidence" value="ECO:0000318"/>
    <property type="project" value="GO_Central"/>
</dbReference>
<dbReference type="GO" id="GO:0003735">
    <property type="term" value="F:structural constituent of ribosome"/>
    <property type="evidence" value="ECO:0000318"/>
    <property type="project" value="GO_Central"/>
</dbReference>
<dbReference type="GO" id="GO:0002181">
    <property type="term" value="P:cytoplasmic translation"/>
    <property type="evidence" value="ECO:0000318"/>
    <property type="project" value="GO_Central"/>
</dbReference>
<dbReference type="GO" id="GO:0000028">
    <property type="term" value="P:ribosomal small subunit assembly"/>
    <property type="evidence" value="ECO:0000318"/>
    <property type="project" value="GO_Central"/>
</dbReference>
<dbReference type="CDD" id="cd01425">
    <property type="entry name" value="RPS2"/>
    <property type="match status" value="1"/>
</dbReference>
<dbReference type="FunFam" id="3.40.50.10490:FF:000012">
    <property type="entry name" value="40S ribosomal protein SA"/>
    <property type="match status" value="1"/>
</dbReference>
<dbReference type="Gene3D" id="3.40.50.10490">
    <property type="entry name" value="Glucose-6-phosphate isomerase like protein, domain 1"/>
    <property type="match status" value="1"/>
</dbReference>
<dbReference type="HAMAP" id="MF_03015">
    <property type="entry name" value="Ribosomal_S2_euk"/>
    <property type="match status" value="1"/>
</dbReference>
<dbReference type="InterPro" id="IPR001865">
    <property type="entry name" value="Ribosomal_uS2"/>
</dbReference>
<dbReference type="InterPro" id="IPR032281">
    <property type="entry name" value="Ribosomal_uS2_C"/>
</dbReference>
<dbReference type="InterPro" id="IPR018130">
    <property type="entry name" value="Ribosomal_uS2_CS"/>
</dbReference>
<dbReference type="InterPro" id="IPR027498">
    <property type="entry name" value="Ribosomal_uS2_euk"/>
</dbReference>
<dbReference type="InterPro" id="IPR005707">
    <property type="entry name" value="Ribosomal_uS2_euk/arc"/>
</dbReference>
<dbReference type="InterPro" id="IPR023591">
    <property type="entry name" value="Ribosomal_uS2_flav_dom_sf"/>
</dbReference>
<dbReference type="NCBIfam" id="TIGR01012">
    <property type="entry name" value="uS2_euk_arch"/>
    <property type="match status" value="1"/>
</dbReference>
<dbReference type="PANTHER" id="PTHR11489">
    <property type="entry name" value="40S RIBOSOMAL PROTEIN SA"/>
    <property type="match status" value="1"/>
</dbReference>
<dbReference type="Pfam" id="PF16122">
    <property type="entry name" value="40S_SA_C"/>
    <property type="match status" value="1"/>
</dbReference>
<dbReference type="Pfam" id="PF00318">
    <property type="entry name" value="Ribosomal_S2"/>
    <property type="match status" value="1"/>
</dbReference>
<dbReference type="PRINTS" id="PR00395">
    <property type="entry name" value="RIBOSOMALS2"/>
</dbReference>
<dbReference type="SUPFAM" id="SSF52313">
    <property type="entry name" value="Ribosomal protein S2"/>
    <property type="match status" value="1"/>
</dbReference>
<dbReference type="PROSITE" id="PS00962">
    <property type="entry name" value="RIBOSOMAL_S2_1"/>
    <property type="match status" value="1"/>
</dbReference>
<dbReference type="PROSITE" id="PS00963">
    <property type="entry name" value="RIBOSOMAL_S2_2"/>
    <property type="match status" value="1"/>
</dbReference>
<keyword id="KW-0963">Cytoplasm</keyword>
<keyword id="KW-1185">Reference proteome</keyword>
<keyword id="KW-0687">Ribonucleoprotein</keyword>
<keyword id="KW-0689">Ribosomal protein</keyword>